<keyword id="KW-0007">Acetylation</keyword>
<keyword id="KW-0963">Cytoplasm</keyword>
<keyword id="KW-0903">Direct protein sequencing</keyword>
<keyword id="KW-1015">Disulfide bond</keyword>
<keyword id="KW-0967">Endosome</keyword>
<keyword id="KW-0458">Lysosome</keyword>
<keyword id="KW-0597">Phosphoprotein</keyword>
<keyword id="KW-0646">Protease inhibitor</keyword>
<keyword id="KW-1185">Reference proteome</keyword>
<keyword id="KW-0964">Secreted</keyword>
<keyword id="KW-0722">Serine protease inhibitor</keyword>
<feature type="chain" id="PRO_0000094102" description="Leukocyte elastase inhibitor">
    <location>
        <begin position="1"/>
        <end position="378"/>
    </location>
</feature>
<feature type="region of interest" description="CARD-binding motif (CBM)" evidence="2">
    <location>
        <begin position="350"/>
        <end position="378"/>
    </location>
</feature>
<feature type="site" description="Reactive bond" evidence="1">
    <location>
        <begin position="343"/>
        <end position="344"/>
    </location>
</feature>
<feature type="modified residue" description="N-acetylmethionine" evidence="2">
    <location>
        <position position="1"/>
    </location>
</feature>
<feature type="modified residue" description="N6-acetyllysine" evidence="2">
    <location>
        <position position="137"/>
    </location>
</feature>
<feature type="modified residue" description="Phosphoserine" evidence="2">
    <location>
        <position position="299"/>
    </location>
</feature>
<feature type="disulfide bond" description="Interchain" evidence="4">
    <location>
        <position position="80"/>
    </location>
</feature>
<comment type="function">
    <text evidence="2">Neutrophil serine protease inhibitor that plays an essential role in the regulation of the innate immune response, inflammation and cellular homeostasis. Acts primarily to protect the cell from proteases released in the cytoplasm during stress or infection. These proteases are important in killing microbes but when released from granules, these potent enzymes also destroy host proteins and contribute to mortality. Regulates the activity of the neutrophil proteases elastase, cathepsin G, proteinase-3, chymase, chymotrypsin, and kallikrein-3. Also acts as a potent intracellular inhibitor of GZMH by directly blocking its proteolytic activity. During inflammation, limits the activity of inflammatory caspases CASP1, CASP4 and CASP5 by suppressing their caspase-recruitment domain (CARD) oligomerization and enzymatic activation. When secreted, promotes the proliferation of beta-cells via its protease inhibitory function.</text>
</comment>
<comment type="function">
    <text evidence="3">May be cleaved leading to a loss of its anti-protease activity and to the appearance of an endonuclease activity. However no catalytic site was identified.</text>
</comment>
<comment type="subunit">
    <text evidence="2">Monomer. Interacts (via C-terminus) with CASP1; CASP4 (via CARD domain) and CASP5; these interactions regulate the activity of inflammatory caspases. Interacts with PRTN3. Interacts with GZMH.</text>
</comment>
<comment type="subcellular location">
    <subcellularLocation>
        <location evidence="2">Secreted</location>
    </subcellularLocation>
    <subcellularLocation>
        <location evidence="2">Cytoplasm</location>
    </subcellularLocation>
    <subcellularLocation>
        <location evidence="2">Cytolytic granule</location>
    </subcellularLocation>
    <subcellularLocation>
        <location evidence="2">Early endosome</location>
    </subcellularLocation>
</comment>
<comment type="similarity">
    <text evidence="4">Belongs to the serpin family. Ov-serpin subfamily.</text>
</comment>
<name>ILEU_PIG</name>
<protein>
    <recommendedName>
        <fullName>Leukocyte elastase inhibitor</fullName>
        <shortName>LEI</shortName>
    </recommendedName>
    <alternativeName>
        <fullName>Leukocyte neutral proteinase inhibitor</fullName>
        <shortName>LNPI</shortName>
    </alternativeName>
    <alternativeName>
        <fullName>Serpin B1</fullName>
    </alternativeName>
</protein>
<sequence length="378" mass="42513">MEQLSAANTRFALDLFRALNESNPAGNIFISPFSISSALAMILLGTRGNTEAQMSKALHFDTVKDIHSRFQSLNADINKCGASYILKLANRLFGEKTYHFLPEFLASTQKTYGAELASVDFLRASEEARKAINEWVKEQTEGKIPELLASGVVDSATKLVLVNAIYFKGSWQEKFMTEATKDAPFRLNKKDSKTVKMMYQKKKFPFGYIKELKCRVLELPYQGKDLSMVILLPDSIEDESTGLRKIEQHLTLEKLNEWTKPDNLELLEVNVHLPRFRLEESYDLNAPLARLGVQDLFGSRADLTGMSEARDLFISKVVHKAFVEVNEEGTEAAAATAGIAVFAMLMPEEDFIADHPFIFFIRHNPSSNILFLGRLSSP</sequence>
<reference key="1">
    <citation type="journal article" date="1993" name="Eur. J. Biochem.">
        <title>Primary structure of a porcine leukocyte serpin.</title>
        <authorList>
            <person name="Teschauer W.F."/>
            <person name="Mentele R."/>
            <person name="Sommerhoff C.P."/>
        </authorList>
    </citation>
    <scope>PROTEIN SEQUENCE</scope>
    <source>
        <tissue>Leukocyte</tissue>
    </source>
</reference>
<reference key="2">
    <citation type="journal article" date="1998" name="Mol. Cell. Biol.">
        <title>L-DNase II, a molecule that links proteases and endonucleases in apoptosis, derives from the ubiquitous serpin leukocyte elastase inhibitor.</title>
        <authorList>
            <person name="Torriglia A."/>
            <person name="Perani P."/>
            <person name="Brossas J.Y."/>
            <person name="Chaudun E."/>
            <person name="Treton J."/>
            <person name="Courtois Y."/>
            <person name="Counis M.F."/>
        </authorList>
    </citation>
    <scope>PROTEIN SEQUENCE OF 57-65; 66-74; 97-107; 111-123; 291-301 AND 311-316</scope>
    <scope>FUNCTION</scope>
</reference>
<organism>
    <name type="scientific">Sus scrofa</name>
    <name type="common">Pig</name>
    <dbReference type="NCBI Taxonomy" id="9823"/>
    <lineage>
        <taxon>Eukaryota</taxon>
        <taxon>Metazoa</taxon>
        <taxon>Chordata</taxon>
        <taxon>Craniata</taxon>
        <taxon>Vertebrata</taxon>
        <taxon>Euteleostomi</taxon>
        <taxon>Mammalia</taxon>
        <taxon>Eutheria</taxon>
        <taxon>Laurasiatheria</taxon>
        <taxon>Artiodactyla</taxon>
        <taxon>Suina</taxon>
        <taxon>Suidae</taxon>
        <taxon>Sus</taxon>
    </lineage>
</organism>
<dbReference type="PIR" id="S38962">
    <property type="entry name" value="S38962"/>
</dbReference>
<dbReference type="SMR" id="P80229"/>
<dbReference type="FunCoup" id="P80229">
    <property type="interactions" value="152"/>
</dbReference>
<dbReference type="STRING" id="9823.ENSSSCP00000001081"/>
<dbReference type="MEROPS" id="I04.006"/>
<dbReference type="PaxDb" id="9823-ENSSSCP00000001081"/>
<dbReference type="PeptideAtlas" id="P80229"/>
<dbReference type="eggNOG" id="KOG2392">
    <property type="taxonomic scope" value="Eukaryota"/>
</dbReference>
<dbReference type="InParanoid" id="P80229"/>
<dbReference type="Proteomes" id="UP000008227">
    <property type="component" value="Unplaced"/>
</dbReference>
<dbReference type="Proteomes" id="UP000314985">
    <property type="component" value="Unplaced"/>
</dbReference>
<dbReference type="Proteomes" id="UP000694570">
    <property type="component" value="Unplaced"/>
</dbReference>
<dbReference type="Proteomes" id="UP000694571">
    <property type="component" value="Unplaced"/>
</dbReference>
<dbReference type="Proteomes" id="UP000694720">
    <property type="component" value="Unplaced"/>
</dbReference>
<dbReference type="Proteomes" id="UP000694722">
    <property type="component" value="Unplaced"/>
</dbReference>
<dbReference type="Proteomes" id="UP000694723">
    <property type="component" value="Unplaced"/>
</dbReference>
<dbReference type="Proteomes" id="UP000694724">
    <property type="component" value="Unplaced"/>
</dbReference>
<dbReference type="Proteomes" id="UP000694725">
    <property type="component" value="Unplaced"/>
</dbReference>
<dbReference type="Proteomes" id="UP000694726">
    <property type="component" value="Unplaced"/>
</dbReference>
<dbReference type="Proteomes" id="UP000694727">
    <property type="component" value="Unplaced"/>
</dbReference>
<dbReference type="Proteomes" id="UP000694728">
    <property type="component" value="Unplaced"/>
</dbReference>
<dbReference type="GO" id="GO:0044194">
    <property type="term" value="C:cytolytic granule"/>
    <property type="evidence" value="ECO:0007669"/>
    <property type="project" value="UniProtKB-SubCell"/>
</dbReference>
<dbReference type="GO" id="GO:0005769">
    <property type="term" value="C:early endosome"/>
    <property type="evidence" value="ECO:0007669"/>
    <property type="project" value="UniProtKB-SubCell"/>
</dbReference>
<dbReference type="GO" id="GO:0005615">
    <property type="term" value="C:extracellular space"/>
    <property type="evidence" value="ECO:0000318"/>
    <property type="project" value="GO_Central"/>
</dbReference>
<dbReference type="GO" id="GO:0004867">
    <property type="term" value="F:serine-type endopeptidase inhibitor activity"/>
    <property type="evidence" value="ECO:0000318"/>
    <property type="project" value="GO_Central"/>
</dbReference>
<dbReference type="GO" id="GO:0032691">
    <property type="term" value="P:negative regulation of interleukin-1 beta production"/>
    <property type="evidence" value="ECO:0000318"/>
    <property type="project" value="GO_Central"/>
</dbReference>
<dbReference type="CDD" id="cd19560">
    <property type="entry name" value="serpinB1_LEI"/>
    <property type="match status" value="1"/>
</dbReference>
<dbReference type="FunFam" id="3.30.497.10:FF:000004">
    <property type="entry name" value="Serpin family B member 1"/>
    <property type="match status" value="1"/>
</dbReference>
<dbReference type="FunFam" id="2.30.39.10:FF:000014">
    <property type="entry name" value="Serpin family B member 9"/>
    <property type="match status" value="1"/>
</dbReference>
<dbReference type="Gene3D" id="2.30.39.10">
    <property type="entry name" value="Alpha-1-antitrypsin, domain 1"/>
    <property type="match status" value="1"/>
</dbReference>
<dbReference type="Gene3D" id="3.30.497.10">
    <property type="entry name" value="Antithrombin, subunit I, domain 2"/>
    <property type="match status" value="1"/>
</dbReference>
<dbReference type="InterPro" id="IPR023795">
    <property type="entry name" value="Serpin_CS"/>
</dbReference>
<dbReference type="InterPro" id="IPR023796">
    <property type="entry name" value="Serpin_dom"/>
</dbReference>
<dbReference type="InterPro" id="IPR000215">
    <property type="entry name" value="Serpin_fam"/>
</dbReference>
<dbReference type="InterPro" id="IPR036186">
    <property type="entry name" value="Serpin_sf"/>
</dbReference>
<dbReference type="InterPro" id="IPR042178">
    <property type="entry name" value="Serpin_sf_1"/>
</dbReference>
<dbReference type="InterPro" id="IPR042185">
    <property type="entry name" value="Serpin_sf_2"/>
</dbReference>
<dbReference type="PANTHER" id="PTHR11461:SF180">
    <property type="entry name" value="LEUKOCYTE ELASTASE INHIBITOR"/>
    <property type="match status" value="1"/>
</dbReference>
<dbReference type="PANTHER" id="PTHR11461">
    <property type="entry name" value="SERINE PROTEASE INHIBITOR, SERPIN"/>
    <property type="match status" value="1"/>
</dbReference>
<dbReference type="Pfam" id="PF00079">
    <property type="entry name" value="Serpin"/>
    <property type="match status" value="1"/>
</dbReference>
<dbReference type="SMART" id="SM00093">
    <property type="entry name" value="SERPIN"/>
    <property type="match status" value="1"/>
</dbReference>
<dbReference type="SUPFAM" id="SSF56574">
    <property type="entry name" value="Serpins"/>
    <property type="match status" value="1"/>
</dbReference>
<dbReference type="PROSITE" id="PS00284">
    <property type="entry name" value="SERPIN"/>
    <property type="match status" value="1"/>
</dbReference>
<gene>
    <name type="primary">SERPINB1</name>
    <name type="synonym">ELANH2</name>
</gene>
<proteinExistence type="evidence at protein level"/>
<accession>P80229</accession>
<evidence type="ECO:0000250" key="1"/>
<evidence type="ECO:0000250" key="2">
    <source>
        <dbReference type="UniProtKB" id="P30740"/>
    </source>
</evidence>
<evidence type="ECO:0000269" key="3">
    <source>
    </source>
</evidence>
<evidence type="ECO:0000305" key="4"/>